<organism>
    <name type="scientific">Drosophila melanogaster</name>
    <name type="common">Fruit fly</name>
    <dbReference type="NCBI Taxonomy" id="7227"/>
    <lineage>
        <taxon>Eukaryota</taxon>
        <taxon>Metazoa</taxon>
        <taxon>Ecdysozoa</taxon>
        <taxon>Arthropoda</taxon>
        <taxon>Hexapoda</taxon>
        <taxon>Insecta</taxon>
        <taxon>Pterygota</taxon>
        <taxon>Neoptera</taxon>
        <taxon>Endopterygota</taxon>
        <taxon>Diptera</taxon>
        <taxon>Brachycera</taxon>
        <taxon>Muscomorpha</taxon>
        <taxon>Ephydroidea</taxon>
        <taxon>Drosophilidae</taxon>
        <taxon>Drosophila</taxon>
        <taxon>Sophophora</taxon>
    </lineage>
</organism>
<protein>
    <recommendedName>
        <fullName>Cytoplasmic phosphatidylinositol transfer protein 1</fullName>
    </recommendedName>
    <alternativeName>
        <fullName>Retinal degeneration B homolog beta</fullName>
        <shortName>RdgBbeta</shortName>
    </alternativeName>
</protein>
<accession>Q9U9P7</accession>
<evidence type="ECO:0000250" key="1"/>
<evidence type="ECO:0000256" key="2">
    <source>
        <dbReference type="SAM" id="MobiDB-lite"/>
    </source>
</evidence>
<evidence type="ECO:0000305" key="3"/>
<proteinExistence type="evidence at transcript level"/>
<dbReference type="EMBL" id="AE013599">
    <property type="protein sequence ID" value="AAF57812.3"/>
    <property type="molecule type" value="Genomic_DNA"/>
</dbReference>
<dbReference type="EMBL" id="AF160934">
    <property type="protein sequence ID" value="AAD46874.1"/>
    <property type="molecule type" value="mRNA"/>
</dbReference>
<dbReference type="RefSeq" id="NP_611248.3">
    <property type="nucleotide sequence ID" value="NM_137404.5"/>
</dbReference>
<dbReference type="SMR" id="Q9U9P7"/>
<dbReference type="FunCoup" id="Q9U9P7">
    <property type="interactions" value="698"/>
</dbReference>
<dbReference type="IntAct" id="Q9U9P7">
    <property type="interactions" value="2"/>
</dbReference>
<dbReference type="STRING" id="7227.FBpp0086048"/>
<dbReference type="PaxDb" id="7227-FBpp0086048"/>
<dbReference type="DNASU" id="37011"/>
<dbReference type="EnsemblMetazoa" id="FBtr0086888">
    <property type="protein sequence ID" value="FBpp0086048"/>
    <property type="gene ID" value="FBgn0027872"/>
</dbReference>
<dbReference type="GeneID" id="37011"/>
<dbReference type="KEGG" id="dme:Dmel_CG17818"/>
<dbReference type="UCSC" id="CG17818-RA">
    <property type="organism name" value="d. melanogaster"/>
</dbReference>
<dbReference type="AGR" id="FB:FBgn0027872"/>
<dbReference type="CTD" id="37011"/>
<dbReference type="FlyBase" id="FBgn0027872">
    <property type="gene designation" value="rdgBbeta"/>
</dbReference>
<dbReference type="VEuPathDB" id="VectorBase:FBgn0027872"/>
<dbReference type="eggNOG" id="KOG3668">
    <property type="taxonomic scope" value="Eukaryota"/>
</dbReference>
<dbReference type="GeneTree" id="ENSGT00940000163128"/>
<dbReference type="HOGENOM" id="CLU_046509_2_0_1"/>
<dbReference type="InParanoid" id="Q9U9P7"/>
<dbReference type="OMA" id="VENRPCE"/>
<dbReference type="OrthoDB" id="10053061at2759"/>
<dbReference type="PhylomeDB" id="Q9U9P7"/>
<dbReference type="BioGRID-ORCS" id="37011">
    <property type="hits" value="0 hits in 1 CRISPR screen"/>
</dbReference>
<dbReference type="GenomeRNAi" id="37011"/>
<dbReference type="PRO" id="PR:Q9U9P7"/>
<dbReference type="Proteomes" id="UP000000803">
    <property type="component" value="Chromosome 2R"/>
</dbReference>
<dbReference type="Bgee" id="FBgn0027872">
    <property type="expression patterns" value="Expressed in adult middle midgut class I enteroendocrine cell in adult midgut (Drosophila) and 98 other cell types or tissues"/>
</dbReference>
<dbReference type="GO" id="GO:0005737">
    <property type="term" value="C:cytoplasm"/>
    <property type="evidence" value="ECO:0000250"/>
    <property type="project" value="UniProtKB"/>
</dbReference>
<dbReference type="GO" id="GO:0035091">
    <property type="term" value="F:phosphatidylinositol binding"/>
    <property type="evidence" value="ECO:0000318"/>
    <property type="project" value="GO_Central"/>
</dbReference>
<dbReference type="GO" id="GO:0008526">
    <property type="term" value="F:phosphatidylinositol transfer activity"/>
    <property type="evidence" value="ECO:0000250"/>
    <property type="project" value="UniProtKB"/>
</dbReference>
<dbReference type="GO" id="GO:0007165">
    <property type="term" value="P:signal transduction"/>
    <property type="evidence" value="ECO:0000250"/>
    <property type="project" value="UniProtKB"/>
</dbReference>
<dbReference type="FunFam" id="3.30.530.20:FF:000011">
    <property type="entry name" value="cytoplasmic phosphatidylinositol transfer protein 1 isoform X2"/>
    <property type="match status" value="1"/>
</dbReference>
<dbReference type="Gene3D" id="3.30.530.20">
    <property type="match status" value="1"/>
</dbReference>
<dbReference type="InterPro" id="IPR001666">
    <property type="entry name" value="PI_transfer"/>
</dbReference>
<dbReference type="InterPro" id="IPR055261">
    <property type="entry name" value="PI_transfer_N"/>
</dbReference>
<dbReference type="InterPro" id="IPR023393">
    <property type="entry name" value="START-like_dom_sf"/>
</dbReference>
<dbReference type="PANTHER" id="PTHR10658:SF54">
    <property type="entry name" value="CYTOPLASMIC PHOSPHATIDYLINOSITOL TRANSFER PROTEIN 1"/>
    <property type="match status" value="1"/>
</dbReference>
<dbReference type="PANTHER" id="PTHR10658">
    <property type="entry name" value="PHOSPHATIDYLINOSITOL TRANSFER PROTEIN"/>
    <property type="match status" value="1"/>
</dbReference>
<dbReference type="Pfam" id="PF02121">
    <property type="entry name" value="IP_trans"/>
    <property type="match status" value="1"/>
</dbReference>
<dbReference type="PRINTS" id="PR00391">
    <property type="entry name" value="PITRANSFER"/>
</dbReference>
<dbReference type="SUPFAM" id="SSF55961">
    <property type="entry name" value="Bet v1-like"/>
    <property type="match status" value="1"/>
</dbReference>
<comment type="function">
    <text evidence="1">Phosphatidylinositol transfer proteins mediate the monomeric transport of lipids by shielding a lipid from the aqueous environment and binding the lipid in a hydrophobic cavity.</text>
</comment>
<comment type="similarity">
    <text evidence="3">Belongs to the PtdIns transfer protein family. PI transfer class IIB subfamily.</text>
</comment>
<gene>
    <name type="primary">rdgBbeta</name>
    <name type="ORF">CG17818</name>
</gene>
<name>PITC1_DROME</name>
<reference key="1">
    <citation type="journal article" date="2000" name="Science">
        <title>The genome sequence of Drosophila melanogaster.</title>
        <authorList>
            <person name="Adams M.D."/>
            <person name="Celniker S.E."/>
            <person name="Holt R.A."/>
            <person name="Evans C.A."/>
            <person name="Gocayne J.D."/>
            <person name="Amanatides P.G."/>
            <person name="Scherer S.E."/>
            <person name="Li P.W."/>
            <person name="Hoskins R.A."/>
            <person name="Galle R.F."/>
            <person name="George R.A."/>
            <person name="Lewis S.E."/>
            <person name="Richards S."/>
            <person name="Ashburner M."/>
            <person name="Henderson S.N."/>
            <person name="Sutton G.G."/>
            <person name="Wortman J.R."/>
            <person name="Yandell M.D."/>
            <person name="Zhang Q."/>
            <person name="Chen L.X."/>
            <person name="Brandon R.C."/>
            <person name="Rogers Y.-H.C."/>
            <person name="Blazej R.G."/>
            <person name="Champe M."/>
            <person name="Pfeiffer B.D."/>
            <person name="Wan K.H."/>
            <person name="Doyle C."/>
            <person name="Baxter E.G."/>
            <person name="Helt G."/>
            <person name="Nelson C.R."/>
            <person name="Miklos G.L.G."/>
            <person name="Abril J.F."/>
            <person name="Agbayani A."/>
            <person name="An H.-J."/>
            <person name="Andrews-Pfannkoch C."/>
            <person name="Baldwin D."/>
            <person name="Ballew R.M."/>
            <person name="Basu A."/>
            <person name="Baxendale J."/>
            <person name="Bayraktaroglu L."/>
            <person name="Beasley E.M."/>
            <person name="Beeson K.Y."/>
            <person name="Benos P.V."/>
            <person name="Berman B.P."/>
            <person name="Bhandari D."/>
            <person name="Bolshakov S."/>
            <person name="Borkova D."/>
            <person name="Botchan M.R."/>
            <person name="Bouck J."/>
            <person name="Brokstein P."/>
            <person name="Brottier P."/>
            <person name="Burtis K.C."/>
            <person name="Busam D.A."/>
            <person name="Butler H."/>
            <person name="Cadieu E."/>
            <person name="Center A."/>
            <person name="Chandra I."/>
            <person name="Cherry J.M."/>
            <person name="Cawley S."/>
            <person name="Dahlke C."/>
            <person name="Davenport L.B."/>
            <person name="Davies P."/>
            <person name="de Pablos B."/>
            <person name="Delcher A."/>
            <person name="Deng Z."/>
            <person name="Mays A.D."/>
            <person name="Dew I."/>
            <person name="Dietz S.M."/>
            <person name="Dodson K."/>
            <person name="Doup L.E."/>
            <person name="Downes M."/>
            <person name="Dugan-Rocha S."/>
            <person name="Dunkov B.C."/>
            <person name="Dunn P."/>
            <person name="Durbin K.J."/>
            <person name="Evangelista C.C."/>
            <person name="Ferraz C."/>
            <person name="Ferriera S."/>
            <person name="Fleischmann W."/>
            <person name="Fosler C."/>
            <person name="Gabrielian A.E."/>
            <person name="Garg N.S."/>
            <person name="Gelbart W.M."/>
            <person name="Glasser K."/>
            <person name="Glodek A."/>
            <person name="Gong F."/>
            <person name="Gorrell J.H."/>
            <person name="Gu Z."/>
            <person name="Guan P."/>
            <person name="Harris M."/>
            <person name="Harris N.L."/>
            <person name="Harvey D.A."/>
            <person name="Heiman T.J."/>
            <person name="Hernandez J.R."/>
            <person name="Houck J."/>
            <person name="Hostin D."/>
            <person name="Houston K.A."/>
            <person name="Howland T.J."/>
            <person name="Wei M.-H."/>
            <person name="Ibegwam C."/>
            <person name="Jalali M."/>
            <person name="Kalush F."/>
            <person name="Karpen G.H."/>
            <person name="Ke Z."/>
            <person name="Kennison J.A."/>
            <person name="Ketchum K.A."/>
            <person name="Kimmel B.E."/>
            <person name="Kodira C.D."/>
            <person name="Kraft C.L."/>
            <person name="Kravitz S."/>
            <person name="Kulp D."/>
            <person name="Lai Z."/>
            <person name="Lasko P."/>
            <person name="Lei Y."/>
            <person name="Levitsky A.A."/>
            <person name="Li J.H."/>
            <person name="Li Z."/>
            <person name="Liang Y."/>
            <person name="Lin X."/>
            <person name="Liu X."/>
            <person name="Mattei B."/>
            <person name="McIntosh T.C."/>
            <person name="McLeod M.P."/>
            <person name="McPherson D."/>
            <person name="Merkulov G."/>
            <person name="Milshina N.V."/>
            <person name="Mobarry C."/>
            <person name="Morris J."/>
            <person name="Moshrefi A."/>
            <person name="Mount S.M."/>
            <person name="Moy M."/>
            <person name="Murphy B."/>
            <person name="Murphy L."/>
            <person name="Muzny D.M."/>
            <person name="Nelson D.L."/>
            <person name="Nelson D.R."/>
            <person name="Nelson K.A."/>
            <person name="Nixon K."/>
            <person name="Nusskern D.R."/>
            <person name="Pacleb J.M."/>
            <person name="Palazzolo M."/>
            <person name="Pittman G.S."/>
            <person name="Pan S."/>
            <person name="Pollard J."/>
            <person name="Puri V."/>
            <person name="Reese M.G."/>
            <person name="Reinert K."/>
            <person name="Remington K."/>
            <person name="Saunders R.D.C."/>
            <person name="Scheeler F."/>
            <person name="Shen H."/>
            <person name="Shue B.C."/>
            <person name="Siden-Kiamos I."/>
            <person name="Simpson M."/>
            <person name="Skupski M.P."/>
            <person name="Smith T.J."/>
            <person name="Spier E."/>
            <person name="Spradling A.C."/>
            <person name="Stapleton M."/>
            <person name="Strong R."/>
            <person name="Sun E."/>
            <person name="Svirskas R."/>
            <person name="Tector C."/>
            <person name="Turner R."/>
            <person name="Venter E."/>
            <person name="Wang A.H."/>
            <person name="Wang X."/>
            <person name="Wang Z.-Y."/>
            <person name="Wassarman D.A."/>
            <person name="Weinstock G.M."/>
            <person name="Weissenbach J."/>
            <person name="Williams S.M."/>
            <person name="Woodage T."/>
            <person name="Worley K.C."/>
            <person name="Wu D."/>
            <person name="Yang S."/>
            <person name="Yao Q.A."/>
            <person name="Ye J."/>
            <person name="Yeh R.-F."/>
            <person name="Zaveri J.S."/>
            <person name="Zhan M."/>
            <person name="Zhang G."/>
            <person name="Zhao Q."/>
            <person name="Zheng L."/>
            <person name="Zheng X.H."/>
            <person name="Zhong F.N."/>
            <person name="Zhong W."/>
            <person name="Zhou X."/>
            <person name="Zhu S.C."/>
            <person name="Zhu X."/>
            <person name="Smith H.O."/>
            <person name="Gibbs R.A."/>
            <person name="Myers E.W."/>
            <person name="Rubin G.M."/>
            <person name="Venter J.C."/>
        </authorList>
    </citation>
    <scope>NUCLEOTIDE SEQUENCE [LARGE SCALE GENOMIC DNA]</scope>
    <source>
        <strain>Berkeley</strain>
    </source>
</reference>
<reference key="2">
    <citation type="journal article" date="2002" name="Genome Biol.">
        <title>Annotation of the Drosophila melanogaster euchromatic genome: a systematic review.</title>
        <authorList>
            <person name="Misra S."/>
            <person name="Crosby M.A."/>
            <person name="Mungall C.J."/>
            <person name="Matthews B.B."/>
            <person name="Campbell K.S."/>
            <person name="Hradecky P."/>
            <person name="Huang Y."/>
            <person name="Kaminker J.S."/>
            <person name="Millburn G.H."/>
            <person name="Prochnik S.E."/>
            <person name="Smith C.D."/>
            <person name="Tupy J.L."/>
            <person name="Whitfield E.J."/>
            <person name="Bayraktaroglu L."/>
            <person name="Berman B.P."/>
            <person name="Bettencourt B.R."/>
            <person name="Celniker S.E."/>
            <person name="de Grey A.D.N.J."/>
            <person name="Drysdale R.A."/>
            <person name="Harris N.L."/>
            <person name="Richter J."/>
            <person name="Russo S."/>
            <person name="Schroeder A.J."/>
            <person name="Shu S.Q."/>
            <person name="Stapleton M."/>
            <person name="Yamada C."/>
            <person name="Ashburner M."/>
            <person name="Gelbart W.M."/>
            <person name="Rubin G.M."/>
            <person name="Lewis S.E."/>
        </authorList>
    </citation>
    <scope>GENOME REANNOTATION</scope>
    <source>
        <strain>Berkeley</strain>
    </source>
</reference>
<reference key="3">
    <citation type="journal article" date="2000" name="Science">
        <title>A Drosophila complementary DNA resource.</title>
        <authorList>
            <person name="Rubin G.M."/>
            <person name="Hong L."/>
            <person name="Brokstein P."/>
            <person name="Evans-Holm M."/>
            <person name="Frise E."/>
            <person name="Stapleton M."/>
            <person name="Harvey D.A."/>
        </authorList>
    </citation>
    <scope>NUCLEOTIDE SEQUENCE [LARGE SCALE MRNA]</scope>
    <source>
        <strain>Berkeley</strain>
        <tissue>Embryo</tissue>
    </source>
</reference>
<feature type="chain" id="PRO_0000287533" description="Cytoplasmic phosphatidylinositol transfer protein 1">
    <location>
        <begin position="1"/>
        <end position="273"/>
    </location>
</feature>
<feature type="region of interest" description="Disordered" evidence="2">
    <location>
        <begin position="244"/>
        <end position="273"/>
    </location>
</feature>
<sequence>MVLIKEYRVCMPLTVEEYKIGQLYMIARHSLEQSEEGEGVEVVENKPCEDPVHGKGQYTEKHIHLSSRLPYWIQAICPRVFYVIEKSWNYYPYTLTEYTCSFIPKLNVLIKTKYEDNNGSTENCLDLTEDELKVRTVDHLDIAFDEVSAKHYKKEEDPKFFKSEKTNRGPLIEGWRETDKPIMCSYKVVHASFEVWGLQTKVEDFIQRGIREILLLGHRQAFAWVDEWHGMTLEDVRAYERQKQAETNEKIHNTSGGANAAANAKEANDGDID</sequence>
<keyword id="KW-0445">Lipid transport</keyword>
<keyword id="KW-0446">Lipid-binding</keyword>
<keyword id="KW-1185">Reference proteome</keyword>
<keyword id="KW-0813">Transport</keyword>